<proteinExistence type="evidence at protein level"/>
<feature type="chain" id="PRO_0000307117" description="Actin-related protein 5">
    <location>
        <begin position="1"/>
        <end position="648"/>
    </location>
</feature>
<feature type="region of interest" description="Disordered" evidence="3">
    <location>
        <begin position="34"/>
        <end position="59"/>
    </location>
</feature>
<feature type="region of interest" description="Disordered" evidence="3">
    <location>
        <begin position="357"/>
        <end position="385"/>
    </location>
</feature>
<feature type="region of interest" description="Disordered" evidence="3">
    <location>
        <begin position="403"/>
        <end position="455"/>
    </location>
</feature>
<feature type="coiled-coil region" evidence="2">
    <location>
        <begin position="277"/>
        <end position="311"/>
    </location>
</feature>
<feature type="coiled-coil region" evidence="2">
    <location>
        <begin position="340"/>
        <end position="364"/>
    </location>
</feature>
<feature type="compositionally biased region" description="Basic and acidic residues" evidence="3">
    <location>
        <begin position="414"/>
        <end position="428"/>
    </location>
</feature>
<feature type="modified residue" description="Phosphoserine" evidence="7">
    <location>
        <position position="471"/>
    </location>
</feature>
<feature type="modified residue" description="Phosphoserine" evidence="7">
    <location>
        <position position="473"/>
    </location>
</feature>
<organism>
    <name type="scientific">Drosophila melanogaster</name>
    <name type="common">Fruit fly</name>
    <dbReference type="NCBI Taxonomy" id="7227"/>
    <lineage>
        <taxon>Eukaryota</taxon>
        <taxon>Metazoa</taxon>
        <taxon>Ecdysozoa</taxon>
        <taxon>Arthropoda</taxon>
        <taxon>Hexapoda</taxon>
        <taxon>Insecta</taxon>
        <taxon>Pterygota</taxon>
        <taxon>Neoptera</taxon>
        <taxon>Endopterygota</taxon>
        <taxon>Diptera</taxon>
        <taxon>Brachycera</taxon>
        <taxon>Muscomorpha</taxon>
        <taxon>Ephydroidea</taxon>
        <taxon>Drosophilidae</taxon>
        <taxon>Drosophila</taxon>
        <taxon>Sophophora</taxon>
    </lineage>
</organism>
<gene>
    <name evidence="8" type="primary">Arp5</name>
    <name type="ORF">CG7940</name>
</gene>
<sequence length="648" mass="75122">MAGKRVLVIDNGSYECRVGWSDSKEPDLRFRNVLTKPRKDRKKEAAASEGSASQTTVEQSAEIQVGNDITNIEAVRAHLKSPFERNVITNWNHQEQIFDYIFTKMGFDGQDKIDHPIILTEALANPNFCRQQMNELLFECYGIPSVSYGIDALYSWKHHQQKQKNISDALIISFGYSTTHVIPVLDGKLQLEHVRRLNVGGYHIITYLFRLMQMKYPVHLNAITISRMEKLVHEHCHIAVDYKEELVQWAQMDYYDEHIMKIQLPYNAVTATNAMLTAEQKQEKRRELAHRLLDIKKNREQEKLREDEQQLFVYNKLRQLYEQKKLDKFERALQQQQIGTLEDLDSLIATINSRIKRAQERAQSGPRPSKQQERLNKMPKPPEGMSQADWLAELQGKREKILGRKQARQQQRSEQAKRHTHAAQERMRIISSLAKNEKRRKANGEEEDDGFGMNDNDWDVYKRINRYNDDSDSDADNEKLMQFDKILNHYDANTDGNSNVPPQSAAENYQLHFGVENIRVPEVLFQPSMIGCSEAGLAELIAFVLKLFPAAEQQRLVEHVYLTGGCAQFKGLKERLIKELMEMRPFQSKFAIYESDEPTLSAWLGACVHAGEPTFGQTLTTRQDHQEHGREFFREHTASNIFYPTPKD</sequence>
<keyword id="KW-0175">Coiled coil</keyword>
<keyword id="KW-0227">DNA damage</keyword>
<keyword id="KW-0233">DNA recombination</keyword>
<keyword id="KW-0234">DNA repair</keyword>
<keyword id="KW-0539">Nucleus</keyword>
<keyword id="KW-0597">Phosphoprotein</keyword>
<keyword id="KW-1185">Reference proteome</keyword>
<keyword id="KW-0804">Transcription</keyword>
<keyword id="KW-0805">Transcription regulation</keyword>
<protein>
    <recommendedName>
        <fullName>Actin-related protein 5</fullName>
    </recommendedName>
</protein>
<accession>Q9VEC3</accession>
<dbReference type="EMBL" id="AE014297">
    <property type="protein sequence ID" value="AAF55504.1"/>
    <property type="molecule type" value="Genomic_DNA"/>
</dbReference>
<dbReference type="EMBL" id="AY069531">
    <property type="protein sequence ID" value="AAL39676.1"/>
    <property type="molecule type" value="mRNA"/>
</dbReference>
<dbReference type="RefSeq" id="NP_001262697.1">
    <property type="nucleotide sequence ID" value="NM_001275768.1"/>
</dbReference>
<dbReference type="RefSeq" id="NP_650684.1">
    <property type="nucleotide sequence ID" value="NM_142427.4"/>
</dbReference>
<dbReference type="SMR" id="Q9VEC3"/>
<dbReference type="BioGRID" id="67194">
    <property type="interactions" value="7"/>
</dbReference>
<dbReference type="ComplexPortal" id="CPX-2693">
    <property type="entry name" value="INO80 chromatin remodeling complex"/>
</dbReference>
<dbReference type="FunCoup" id="Q9VEC3">
    <property type="interactions" value="1434"/>
</dbReference>
<dbReference type="IntAct" id="Q9VEC3">
    <property type="interactions" value="5"/>
</dbReference>
<dbReference type="STRING" id="7227.FBpp0082979"/>
<dbReference type="GlyGen" id="Q9VEC3">
    <property type="glycosylation" value="1 site"/>
</dbReference>
<dbReference type="iPTMnet" id="Q9VEC3"/>
<dbReference type="PaxDb" id="7227-FBpp0082979"/>
<dbReference type="DNASU" id="42173"/>
<dbReference type="EnsemblMetazoa" id="FBtr0083557">
    <property type="protein sequence ID" value="FBpp0082979"/>
    <property type="gene ID" value="FBgn0038576"/>
</dbReference>
<dbReference type="EnsemblMetazoa" id="FBtr0336468">
    <property type="protein sequence ID" value="FBpp0307571"/>
    <property type="gene ID" value="FBgn0038576"/>
</dbReference>
<dbReference type="GeneID" id="42173"/>
<dbReference type="KEGG" id="dme:Dmel_CG7940"/>
<dbReference type="AGR" id="FB:FBgn0038576"/>
<dbReference type="CTD" id="42173"/>
<dbReference type="FlyBase" id="FBgn0038576">
    <property type="gene designation" value="Arp5"/>
</dbReference>
<dbReference type="VEuPathDB" id="VectorBase:FBgn0038576"/>
<dbReference type="eggNOG" id="KOG0681">
    <property type="taxonomic scope" value="Eukaryota"/>
</dbReference>
<dbReference type="GeneTree" id="ENSGT00720000108866"/>
<dbReference type="HOGENOM" id="CLU_008246_1_0_1"/>
<dbReference type="InParanoid" id="Q9VEC3"/>
<dbReference type="OMA" id="YPFTEHV"/>
<dbReference type="OrthoDB" id="7340501at2759"/>
<dbReference type="PhylomeDB" id="Q9VEC3"/>
<dbReference type="Reactome" id="R-DME-5689603">
    <property type="pathway name" value="UCH proteinases"/>
</dbReference>
<dbReference type="Reactome" id="R-DME-5696394">
    <property type="pathway name" value="DNA Damage Recognition in GG-NER"/>
</dbReference>
<dbReference type="SignaLink" id="Q9VEC3"/>
<dbReference type="BioGRID-ORCS" id="42173">
    <property type="hits" value="0 hits in 1 CRISPR screen"/>
</dbReference>
<dbReference type="GenomeRNAi" id="42173"/>
<dbReference type="PRO" id="PR:Q9VEC3"/>
<dbReference type="Proteomes" id="UP000000803">
    <property type="component" value="Chromosome 3R"/>
</dbReference>
<dbReference type="Bgee" id="FBgn0038576">
    <property type="expression patterns" value="Expressed in mid-late elongation-stage spermatid (Drosophila) in testis and 81 other cell types or tissues"/>
</dbReference>
<dbReference type="ExpressionAtlas" id="Q9VEC3">
    <property type="expression patterns" value="baseline and differential"/>
</dbReference>
<dbReference type="GO" id="GO:0005737">
    <property type="term" value="C:cytoplasm"/>
    <property type="evidence" value="ECO:0000318"/>
    <property type="project" value="GO_Central"/>
</dbReference>
<dbReference type="GO" id="GO:0031011">
    <property type="term" value="C:Ino80 complex"/>
    <property type="evidence" value="ECO:0000314"/>
    <property type="project" value="FlyBase"/>
</dbReference>
<dbReference type="GO" id="GO:0005634">
    <property type="term" value="C:nucleus"/>
    <property type="evidence" value="ECO:0000314"/>
    <property type="project" value="FlyBase"/>
</dbReference>
<dbReference type="GO" id="GO:0006338">
    <property type="term" value="P:chromatin remodeling"/>
    <property type="evidence" value="ECO:0000315"/>
    <property type="project" value="UniProtKB"/>
</dbReference>
<dbReference type="GO" id="GO:0006310">
    <property type="term" value="P:DNA recombination"/>
    <property type="evidence" value="ECO:0007669"/>
    <property type="project" value="UniProtKB-KW"/>
</dbReference>
<dbReference type="GO" id="GO:0006281">
    <property type="term" value="P:DNA repair"/>
    <property type="evidence" value="ECO:0007669"/>
    <property type="project" value="UniProtKB-KW"/>
</dbReference>
<dbReference type="GO" id="GO:0006355">
    <property type="term" value="P:regulation of DNA-templated transcription"/>
    <property type="evidence" value="ECO:0000315"/>
    <property type="project" value="UniProtKB"/>
</dbReference>
<dbReference type="CDD" id="cd10211">
    <property type="entry name" value="ASKHA_NBD_Arp5"/>
    <property type="match status" value="1"/>
</dbReference>
<dbReference type="FunFam" id="3.30.420.40:FF:000237">
    <property type="entry name" value="Actin-related protein 5"/>
    <property type="match status" value="1"/>
</dbReference>
<dbReference type="FunFam" id="3.30.420.40:FF:000248">
    <property type="entry name" value="Actin-related protein 5"/>
    <property type="match status" value="1"/>
</dbReference>
<dbReference type="FunFam" id="3.30.420.40:FF:000048">
    <property type="entry name" value="ARP5 actin-related protein 5 homolog"/>
    <property type="match status" value="1"/>
</dbReference>
<dbReference type="FunFam" id="3.90.640.10:FF:000016">
    <property type="entry name" value="ARP5 actin-related protein 5 homolog"/>
    <property type="match status" value="1"/>
</dbReference>
<dbReference type="Gene3D" id="3.30.420.40">
    <property type="match status" value="4"/>
</dbReference>
<dbReference type="Gene3D" id="3.90.640.10">
    <property type="entry name" value="Actin, Chain A, domain 4"/>
    <property type="match status" value="2"/>
</dbReference>
<dbReference type="InterPro" id="IPR004000">
    <property type="entry name" value="Actin"/>
</dbReference>
<dbReference type="InterPro" id="IPR043129">
    <property type="entry name" value="ATPase_NBD"/>
</dbReference>
<dbReference type="PANTHER" id="PTHR11937">
    <property type="entry name" value="ACTIN"/>
    <property type="match status" value="1"/>
</dbReference>
<dbReference type="Pfam" id="PF00022">
    <property type="entry name" value="Actin"/>
    <property type="match status" value="2"/>
</dbReference>
<dbReference type="SMART" id="SM00268">
    <property type="entry name" value="ACTIN"/>
    <property type="match status" value="1"/>
</dbReference>
<dbReference type="SUPFAM" id="SSF53067">
    <property type="entry name" value="Actin-like ATPase domain"/>
    <property type="match status" value="2"/>
</dbReference>
<reference evidence="10" key="1">
    <citation type="journal article" date="2000" name="Science">
        <title>The genome sequence of Drosophila melanogaster.</title>
        <authorList>
            <person name="Adams M.D."/>
            <person name="Celniker S.E."/>
            <person name="Holt R.A."/>
            <person name="Evans C.A."/>
            <person name="Gocayne J.D."/>
            <person name="Amanatides P.G."/>
            <person name="Scherer S.E."/>
            <person name="Li P.W."/>
            <person name="Hoskins R.A."/>
            <person name="Galle R.F."/>
            <person name="George R.A."/>
            <person name="Lewis S.E."/>
            <person name="Richards S."/>
            <person name="Ashburner M."/>
            <person name="Henderson S.N."/>
            <person name="Sutton G.G."/>
            <person name="Wortman J.R."/>
            <person name="Yandell M.D."/>
            <person name="Zhang Q."/>
            <person name="Chen L.X."/>
            <person name="Brandon R.C."/>
            <person name="Rogers Y.-H.C."/>
            <person name="Blazej R.G."/>
            <person name="Champe M."/>
            <person name="Pfeiffer B.D."/>
            <person name="Wan K.H."/>
            <person name="Doyle C."/>
            <person name="Baxter E.G."/>
            <person name="Helt G."/>
            <person name="Nelson C.R."/>
            <person name="Miklos G.L.G."/>
            <person name="Abril J.F."/>
            <person name="Agbayani A."/>
            <person name="An H.-J."/>
            <person name="Andrews-Pfannkoch C."/>
            <person name="Baldwin D."/>
            <person name="Ballew R.M."/>
            <person name="Basu A."/>
            <person name="Baxendale J."/>
            <person name="Bayraktaroglu L."/>
            <person name="Beasley E.M."/>
            <person name="Beeson K.Y."/>
            <person name="Benos P.V."/>
            <person name="Berman B.P."/>
            <person name="Bhandari D."/>
            <person name="Bolshakov S."/>
            <person name="Borkova D."/>
            <person name="Botchan M.R."/>
            <person name="Bouck J."/>
            <person name="Brokstein P."/>
            <person name="Brottier P."/>
            <person name="Burtis K.C."/>
            <person name="Busam D.A."/>
            <person name="Butler H."/>
            <person name="Cadieu E."/>
            <person name="Center A."/>
            <person name="Chandra I."/>
            <person name="Cherry J.M."/>
            <person name="Cawley S."/>
            <person name="Dahlke C."/>
            <person name="Davenport L.B."/>
            <person name="Davies P."/>
            <person name="de Pablos B."/>
            <person name="Delcher A."/>
            <person name="Deng Z."/>
            <person name="Mays A.D."/>
            <person name="Dew I."/>
            <person name="Dietz S.M."/>
            <person name="Dodson K."/>
            <person name="Doup L.E."/>
            <person name="Downes M."/>
            <person name="Dugan-Rocha S."/>
            <person name="Dunkov B.C."/>
            <person name="Dunn P."/>
            <person name="Durbin K.J."/>
            <person name="Evangelista C.C."/>
            <person name="Ferraz C."/>
            <person name="Ferriera S."/>
            <person name="Fleischmann W."/>
            <person name="Fosler C."/>
            <person name="Gabrielian A.E."/>
            <person name="Garg N.S."/>
            <person name="Gelbart W.M."/>
            <person name="Glasser K."/>
            <person name="Glodek A."/>
            <person name="Gong F."/>
            <person name="Gorrell J.H."/>
            <person name="Gu Z."/>
            <person name="Guan P."/>
            <person name="Harris M."/>
            <person name="Harris N.L."/>
            <person name="Harvey D.A."/>
            <person name="Heiman T.J."/>
            <person name="Hernandez J.R."/>
            <person name="Houck J."/>
            <person name="Hostin D."/>
            <person name="Houston K.A."/>
            <person name="Howland T.J."/>
            <person name="Wei M.-H."/>
            <person name="Ibegwam C."/>
            <person name="Jalali M."/>
            <person name="Kalush F."/>
            <person name="Karpen G.H."/>
            <person name="Ke Z."/>
            <person name="Kennison J.A."/>
            <person name="Ketchum K.A."/>
            <person name="Kimmel B.E."/>
            <person name="Kodira C.D."/>
            <person name="Kraft C.L."/>
            <person name="Kravitz S."/>
            <person name="Kulp D."/>
            <person name="Lai Z."/>
            <person name="Lasko P."/>
            <person name="Lei Y."/>
            <person name="Levitsky A.A."/>
            <person name="Li J.H."/>
            <person name="Li Z."/>
            <person name="Liang Y."/>
            <person name="Lin X."/>
            <person name="Liu X."/>
            <person name="Mattei B."/>
            <person name="McIntosh T.C."/>
            <person name="McLeod M.P."/>
            <person name="McPherson D."/>
            <person name="Merkulov G."/>
            <person name="Milshina N.V."/>
            <person name="Mobarry C."/>
            <person name="Morris J."/>
            <person name="Moshrefi A."/>
            <person name="Mount S.M."/>
            <person name="Moy M."/>
            <person name="Murphy B."/>
            <person name="Murphy L."/>
            <person name="Muzny D.M."/>
            <person name="Nelson D.L."/>
            <person name="Nelson D.R."/>
            <person name="Nelson K.A."/>
            <person name="Nixon K."/>
            <person name="Nusskern D.R."/>
            <person name="Pacleb J.M."/>
            <person name="Palazzolo M."/>
            <person name="Pittman G.S."/>
            <person name="Pan S."/>
            <person name="Pollard J."/>
            <person name="Puri V."/>
            <person name="Reese M.G."/>
            <person name="Reinert K."/>
            <person name="Remington K."/>
            <person name="Saunders R.D.C."/>
            <person name="Scheeler F."/>
            <person name="Shen H."/>
            <person name="Shue B.C."/>
            <person name="Siden-Kiamos I."/>
            <person name="Simpson M."/>
            <person name="Skupski M.P."/>
            <person name="Smith T.J."/>
            <person name="Spier E."/>
            <person name="Spradling A.C."/>
            <person name="Stapleton M."/>
            <person name="Strong R."/>
            <person name="Sun E."/>
            <person name="Svirskas R."/>
            <person name="Tector C."/>
            <person name="Turner R."/>
            <person name="Venter E."/>
            <person name="Wang A.H."/>
            <person name="Wang X."/>
            <person name="Wang Z.-Y."/>
            <person name="Wassarman D.A."/>
            <person name="Weinstock G.M."/>
            <person name="Weissenbach J."/>
            <person name="Williams S.M."/>
            <person name="Woodage T."/>
            <person name="Worley K.C."/>
            <person name="Wu D."/>
            <person name="Yang S."/>
            <person name="Yao Q.A."/>
            <person name="Ye J."/>
            <person name="Yeh R.-F."/>
            <person name="Zaveri J.S."/>
            <person name="Zhan M."/>
            <person name="Zhang G."/>
            <person name="Zhao Q."/>
            <person name="Zheng L."/>
            <person name="Zheng X.H."/>
            <person name="Zhong F.N."/>
            <person name="Zhong W."/>
            <person name="Zhou X."/>
            <person name="Zhu S.C."/>
            <person name="Zhu X."/>
            <person name="Smith H.O."/>
            <person name="Gibbs R.A."/>
            <person name="Myers E.W."/>
            <person name="Rubin G.M."/>
            <person name="Venter J.C."/>
        </authorList>
    </citation>
    <scope>NUCLEOTIDE SEQUENCE [LARGE SCALE GENOMIC DNA]</scope>
    <source>
        <strain evidence="4">Berkeley</strain>
    </source>
</reference>
<reference evidence="9 10" key="2">
    <citation type="journal article" date="2002" name="Genome Biol.">
        <title>Annotation of the Drosophila melanogaster euchromatic genome: a systematic review.</title>
        <authorList>
            <person name="Misra S."/>
            <person name="Crosby M.A."/>
            <person name="Mungall C.J."/>
            <person name="Matthews B.B."/>
            <person name="Campbell K.S."/>
            <person name="Hradecky P."/>
            <person name="Huang Y."/>
            <person name="Kaminker J.S."/>
            <person name="Millburn G.H."/>
            <person name="Prochnik S.E."/>
            <person name="Smith C.D."/>
            <person name="Tupy J.L."/>
            <person name="Whitfield E.J."/>
            <person name="Bayraktaroglu L."/>
            <person name="Berman B.P."/>
            <person name="Bettencourt B.R."/>
            <person name="Celniker S.E."/>
            <person name="de Grey A.D.N.J."/>
            <person name="Drysdale R.A."/>
            <person name="Harris N.L."/>
            <person name="Richter J."/>
            <person name="Russo S."/>
            <person name="Schroeder A.J."/>
            <person name="Shu S.Q."/>
            <person name="Stapleton M."/>
            <person name="Yamada C."/>
            <person name="Ashburner M."/>
            <person name="Gelbart W.M."/>
            <person name="Rubin G.M."/>
            <person name="Lewis S.E."/>
        </authorList>
    </citation>
    <scope>GENOME REANNOTATION</scope>
    <source>
        <strain>Berkeley</strain>
    </source>
</reference>
<reference evidence="11" key="3">
    <citation type="journal article" date="2002" name="Genome Biol.">
        <title>A Drosophila full-length cDNA resource.</title>
        <authorList>
            <person name="Stapleton M."/>
            <person name="Carlson J.W."/>
            <person name="Brokstein P."/>
            <person name="Yu C."/>
            <person name="Champe M."/>
            <person name="George R.A."/>
            <person name="Guarin H."/>
            <person name="Kronmiller B."/>
            <person name="Pacleb J.M."/>
            <person name="Park S."/>
            <person name="Wan K.H."/>
            <person name="Rubin G.M."/>
            <person name="Celniker S.E."/>
        </authorList>
    </citation>
    <scope>NUCLEOTIDE SEQUENCE [LARGE SCALE MRNA]</scope>
    <source>
        <strain evidence="11">Berkeley</strain>
        <tissue evidence="5">Embryo</tissue>
    </source>
</reference>
<reference evidence="9" key="4">
    <citation type="journal article" date="2006" name="Genes Dev.">
        <title>A Polycomb group protein complex with sequence-specific DNA-binding and selective methyl-lysine-binding activities.</title>
        <authorList>
            <person name="Klymenko T."/>
            <person name="Papp B."/>
            <person name="Fischle W."/>
            <person name="Koecher T."/>
            <person name="Schelder M."/>
            <person name="Fritsch C."/>
            <person name="Wild B."/>
            <person name="Wilm M."/>
            <person name="Mueller J."/>
        </authorList>
    </citation>
    <scope>IDENTIFICATION IN THE INO80 COMPLEX</scope>
    <scope>SUBCELLULAR LOCATION</scope>
    <source>
        <tissue evidence="6">Embryo</tissue>
    </source>
</reference>
<reference key="5">
    <citation type="journal article" date="2008" name="J. Proteome Res.">
        <title>Phosphoproteome analysis of Drosophila melanogaster embryos.</title>
        <authorList>
            <person name="Zhai B."/>
            <person name="Villen J."/>
            <person name="Beausoleil S.A."/>
            <person name="Mintseris J."/>
            <person name="Gygi S.P."/>
        </authorList>
    </citation>
    <scope>PHOSPHORYLATION [LARGE SCALE ANALYSIS] AT SER-471 AND SER-473</scope>
    <scope>IDENTIFICATION BY MASS SPECTROMETRY</scope>
    <source>
        <tissue>Embryo</tissue>
    </source>
</reference>
<comment type="function">
    <text evidence="1">Proposed core component of the chromatin remodeling Ino80 complex which is involved in transcriptional regulation, DNA replication and probably DNA repair.</text>
</comment>
<comment type="subunit">
    <text evidence="6">Component of the chromatin remodeling Ino80 complex.</text>
</comment>
<comment type="subcellular location">
    <subcellularLocation>
        <location evidence="6">Nucleus</location>
    </subcellularLocation>
</comment>
<comment type="similarity">
    <text evidence="9">Belongs to the actin family. ARP5 subfamily.</text>
</comment>
<name>ARP5_DROME</name>
<evidence type="ECO:0000250" key="1"/>
<evidence type="ECO:0000255" key="2"/>
<evidence type="ECO:0000256" key="3">
    <source>
        <dbReference type="SAM" id="MobiDB-lite"/>
    </source>
</evidence>
<evidence type="ECO:0000269" key="4">
    <source>
    </source>
</evidence>
<evidence type="ECO:0000269" key="5">
    <source>
    </source>
</evidence>
<evidence type="ECO:0000269" key="6">
    <source>
    </source>
</evidence>
<evidence type="ECO:0000269" key="7">
    <source>
    </source>
</evidence>
<evidence type="ECO:0000303" key="8">
    <source>
    </source>
</evidence>
<evidence type="ECO:0000305" key="9"/>
<evidence type="ECO:0000312" key="10">
    <source>
        <dbReference type="EMBL" id="AAF55504.1"/>
    </source>
</evidence>
<evidence type="ECO:0000312" key="11">
    <source>
        <dbReference type="EMBL" id="AAL39676.1"/>
    </source>
</evidence>